<evidence type="ECO:0000255" key="1">
    <source>
        <dbReference type="HAMAP-Rule" id="MF_00285"/>
    </source>
</evidence>
<feature type="chain" id="PRO_1000022440" description="Potassium-transporting ATPase ATP-binding subunit">
    <location>
        <begin position="1"/>
        <end position="682"/>
    </location>
</feature>
<feature type="transmembrane region" description="Helical" evidence="1">
    <location>
        <begin position="34"/>
        <end position="54"/>
    </location>
</feature>
<feature type="transmembrane region" description="Helical" evidence="1">
    <location>
        <begin position="62"/>
        <end position="82"/>
    </location>
</feature>
<feature type="transmembrane region" description="Helical" evidence="1">
    <location>
        <begin position="219"/>
        <end position="239"/>
    </location>
</feature>
<feature type="transmembrane region" description="Helical" evidence="1">
    <location>
        <begin position="254"/>
        <end position="274"/>
    </location>
</feature>
<feature type="transmembrane region" description="Helical" evidence="1">
    <location>
        <begin position="588"/>
        <end position="608"/>
    </location>
</feature>
<feature type="transmembrane region" description="Helical" evidence="1">
    <location>
        <begin position="616"/>
        <end position="636"/>
    </location>
</feature>
<feature type="transmembrane region" description="Helical" evidence="1">
    <location>
        <begin position="656"/>
        <end position="676"/>
    </location>
</feature>
<feature type="active site" description="4-aspartylphosphate intermediate" evidence="1">
    <location>
        <position position="307"/>
    </location>
</feature>
<feature type="binding site" evidence="1">
    <location>
        <position position="344"/>
    </location>
    <ligand>
        <name>ATP</name>
        <dbReference type="ChEBI" id="CHEBI:30616"/>
    </ligand>
</feature>
<feature type="binding site" evidence="1">
    <location>
        <position position="348"/>
    </location>
    <ligand>
        <name>ATP</name>
        <dbReference type="ChEBI" id="CHEBI:30616"/>
    </ligand>
</feature>
<feature type="binding site" evidence="1">
    <location>
        <begin position="377"/>
        <end position="384"/>
    </location>
    <ligand>
        <name>ATP</name>
        <dbReference type="ChEBI" id="CHEBI:30616"/>
    </ligand>
</feature>
<feature type="binding site" evidence="1">
    <location>
        <position position="395"/>
    </location>
    <ligand>
        <name>ATP</name>
        <dbReference type="ChEBI" id="CHEBI:30616"/>
    </ligand>
</feature>
<feature type="binding site" evidence="1">
    <location>
        <position position="518"/>
    </location>
    <ligand>
        <name>Mg(2+)</name>
        <dbReference type="ChEBI" id="CHEBI:18420"/>
    </ligand>
</feature>
<feature type="binding site" evidence="1">
    <location>
        <position position="522"/>
    </location>
    <ligand>
        <name>Mg(2+)</name>
        <dbReference type="ChEBI" id="CHEBI:18420"/>
    </ligand>
</feature>
<organism>
    <name type="scientific">Escherichia coli (strain UTI89 / UPEC)</name>
    <dbReference type="NCBI Taxonomy" id="364106"/>
    <lineage>
        <taxon>Bacteria</taxon>
        <taxon>Pseudomonadati</taxon>
        <taxon>Pseudomonadota</taxon>
        <taxon>Gammaproteobacteria</taxon>
        <taxon>Enterobacterales</taxon>
        <taxon>Enterobacteriaceae</taxon>
        <taxon>Escherichia</taxon>
    </lineage>
</organism>
<reference key="1">
    <citation type="journal article" date="2006" name="Proc. Natl. Acad. Sci. U.S.A.">
        <title>Identification of genes subject to positive selection in uropathogenic strains of Escherichia coli: a comparative genomics approach.</title>
        <authorList>
            <person name="Chen S.L."/>
            <person name="Hung C.-S."/>
            <person name="Xu J."/>
            <person name="Reigstad C.S."/>
            <person name="Magrini V."/>
            <person name="Sabo A."/>
            <person name="Blasiar D."/>
            <person name="Bieri T."/>
            <person name="Meyer R.R."/>
            <person name="Ozersky P."/>
            <person name="Armstrong J.R."/>
            <person name="Fulton R.S."/>
            <person name="Latreille J.P."/>
            <person name="Spieth J."/>
            <person name="Hooton T.M."/>
            <person name="Mardis E.R."/>
            <person name="Hultgren S.J."/>
            <person name="Gordon J.I."/>
        </authorList>
    </citation>
    <scope>NUCLEOTIDE SEQUENCE [LARGE SCALE GENOMIC DNA]</scope>
    <source>
        <strain>UTI89 / UPEC</strain>
    </source>
</reference>
<comment type="function">
    <text evidence="1">Part of the high-affinity ATP-driven potassium transport (or Kdp) system, which catalyzes the hydrolysis of ATP coupled with the electrogenic transport of potassium into the cytoplasm. This subunit is responsible for energy coupling to the transport system and for the release of the potassium ions to the cytoplasm.</text>
</comment>
<comment type="catalytic activity">
    <reaction evidence="1">
        <text>K(+)(out) + ATP + H2O = K(+)(in) + ADP + phosphate + H(+)</text>
        <dbReference type="Rhea" id="RHEA:16777"/>
        <dbReference type="ChEBI" id="CHEBI:15377"/>
        <dbReference type="ChEBI" id="CHEBI:15378"/>
        <dbReference type="ChEBI" id="CHEBI:29103"/>
        <dbReference type="ChEBI" id="CHEBI:30616"/>
        <dbReference type="ChEBI" id="CHEBI:43474"/>
        <dbReference type="ChEBI" id="CHEBI:456216"/>
        <dbReference type="EC" id="7.2.2.6"/>
    </reaction>
    <physiologicalReaction direction="left-to-right" evidence="1">
        <dbReference type="Rhea" id="RHEA:16778"/>
    </physiologicalReaction>
</comment>
<comment type="subunit">
    <text evidence="1">The system is composed of three essential subunits: KdpA, KdpB and KdpC.</text>
</comment>
<comment type="subcellular location">
    <subcellularLocation>
        <location evidence="1">Cell inner membrane</location>
        <topology evidence="1">Multi-pass membrane protein</topology>
    </subcellularLocation>
</comment>
<comment type="similarity">
    <text evidence="1">Belongs to the cation transport ATPase (P-type) (TC 3.A.3) family. Type IA subfamily.</text>
</comment>
<sequence>MSRKQLALFEPTLVVQALKEAVKKLNPQAQWRNPVMFIVWIGSLLTTCISIAMASDVMPGNALFSAAISGWLWVTVLFANFAEALAEGRSKAQANSLKGVKKTAFARKLREPKYGAAADKVPADQLRKGDIVLVEASDIIPCDGEVIEGGASVDESAITGESAPVIRESGGDFASVTGGTRILSDWLVIECSVNPGETFLDRMIAMVEGAQRRKTPNEIALTILLIALTIVFLLATATLWPFSAWGGNAVSVTVLVALLVCLIPTTIGGLLSAIGVAGMSRMLGANVIATSGRAVEAAGDVDVLLLDKTGTITLGNRQASEFIPAQGVEEKALADAAQLASLADETPEGRSIVILAKQRFNLRERDVQSLHATFVPFTAQSRMSGINIDNRMIRKGSVDAIRRHVEANGGHFPADVDQKVDQVARQGATPLVVVEGSRVLGVIALKDIVKGGIKERFAQLRKMGIKTVMITGDNRLTAAAIAAEAGVDDFLAEATPEAKLALIRQYQAEGRLVAMTGDGTNDAPALAQADVAVAMNSGTQAAKEAGNMVDLDSNPTKLIEVVHIGKQMLMTRGSLTTFSIANDVAKYFAIIPAAFAATYPQLNALNIMRLHSPDSAILSAVIFNALIIVFLIPLALKGVSYKPLTASAMLRRNLWIYGLGGLLVPFIGIKVIDLLLTVCGLV</sequence>
<protein>
    <recommendedName>
        <fullName evidence="1">Potassium-transporting ATPase ATP-binding subunit</fullName>
        <ecNumber evidence="1">7.2.2.6</ecNumber>
    </recommendedName>
    <alternativeName>
        <fullName evidence="1">ATP phosphohydrolase [potassium-transporting] B chain</fullName>
    </alternativeName>
    <alternativeName>
        <fullName evidence="1">Potassium-binding and translocating subunit B</fullName>
    </alternativeName>
    <alternativeName>
        <fullName evidence="1">Potassium-translocating ATPase B chain</fullName>
    </alternativeName>
</protein>
<keyword id="KW-0067">ATP-binding</keyword>
<keyword id="KW-0997">Cell inner membrane</keyword>
<keyword id="KW-1003">Cell membrane</keyword>
<keyword id="KW-0406">Ion transport</keyword>
<keyword id="KW-0460">Magnesium</keyword>
<keyword id="KW-0472">Membrane</keyword>
<keyword id="KW-0479">Metal-binding</keyword>
<keyword id="KW-0547">Nucleotide-binding</keyword>
<keyword id="KW-0597">Phosphoprotein</keyword>
<keyword id="KW-0630">Potassium</keyword>
<keyword id="KW-0633">Potassium transport</keyword>
<keyword id="KW-1278">Translocase</keyword>
<keyword id="KW-0812">Transmembrane</keyword>
<keyword id="KW-1133">Transmembrane helix</keyword>
<keyword id="KW-0813">Transport</keyword>
<proteinExistence type="inferred from homology"/>
<name>KDPB_ECOUT</name>
<accession>Q1REM0</accession>
<dbReference type="EC" id="7.2.2.6" evidence="1"/>
<dbReference type="EMBL" id="CP000243">
    <property type="protein sequence ID" value="ABE06194.1"/>
    <property type="molecule type" value="Genomic_DNA"/>
</dbReference>
<dbReference type="RefSeq" id="WP_000087931.1">
    <property type="nucleotide sequence ID" value="NZ_CP064825.1"/>
</dbReference>
<dbReference type="SMR" id="Q1REM0"/>
<dbReference type="KEGG" id="eci:UTI89_C0701"/>
<dbReference type="HOGENOM" id="CLU_025728_2_0_6"/>
<dbReference type="Proteomes" id="UP000001952">
    <property type="component" value="Chromosome"/>
</dbReference>
<dbReference type="GO" id="GO:0005886">
    <property type="term" value="C:plasma membrane"/>
    <property type="evidence" value="ECO:0007669"/>
    <property type="project" value="UniProtKB-SubCell"/>
</dbReference>
<dbReference type="GO" id="GO:0005524">
    <property type="term" value="F:ATP binding"/>
    <property type="evidence" value="ECO:0007669"/>
    <property type="project" value="UniProtKB-UniRule"/>
</dbReference>
<dbReference type="GO" id="GO:0016887">
    <property type="term" value="F:ATP hydrolysis activity"/>
    <property type="evidence" value="ECO:0007669"/>
    <property type="project" value="InterPro"/>
</dbReference>
<dbReference type="GO" id="GO:0000287">
    <property type="term" value="F:magnesium ion binding"/>
    <property type="evidence" value="ECO:0007669"/>
    <property type="project" value="UniProtKB-UniRule"/>
</dbReference>
<dbReference type="GO" id="GO:0008556">
    <property type="term" value="F:P-type potassium transmembrane transporter activity"/>
    <property type="evidence" value="ECO:0007669"/>
    <property type="project" value="UniProtKB-UniRule"/>
</dbReference>
<dbReference type="CDD" id="cd02078">
    <property type="entry name" value="P-type_ATPase_K"/>
    <property type="match status" value="1"/>
</dbReference>
<dbReference type="FunFam" id="2.70.150.10:FF:000010">
    <property type="entry name" value="Potassium-transporting ATPase ATP-binding subunit"/>
    <property type="match status" value="1"/>
</dbReference>
<dbReference type="FunFam" id="3.40.1110.10:FF:000007">
    <property type="entry name" value="Potassium-transporting ATPase ATP-binding subunit"/>
    <property type="match status" value="1"/>
</dbReference>
<dbReference type="Gene3D" id="3.40.1110.10">
    <property type="entry name" value="Calcium-transporting ATPase, cytoplasmic domain N"/>
    <property type="match status" value="1"/>
</dbReference>
<dbReference type="Gene3D" id="2.70.150.10">
    <property type="entry name" value="Calcium-transporting ATPase, cytoplasmic transduction domain A"/>
    <property type="match status" value="1"/>
</dbReference>
<dbReference type="Gene3D" id="3.40.50.1000">
    <property type="entry name" value="HAD superfamily/HAD-like"/>
    <property type="match status" value="1"/>
</dbReference>
<dbReference type="HAMAP" id="MF_00285">
    <property type="entry name" value="KdpB"/>
    <property type="match status" value="1"/>
</dbReference>
<dbReference type="InterPro" id="IPR023299">
    <property type="entry name" value="ATPase_P-typ_cyto_dom_N"/>
</dbReference>
<dbReference type="InterPro" id="IPR018303">
    <property type="entry name" value="ATPase_P-typ_P_site"/>
</dbReference>
<dbReference type="InterPro" id="IPR023298">
    <property type="entry name" value="ATPase_P-typ_TM_dom_sf"/>
</dbReference>
<dbReference type="InterPro" id="IPR008250">
    <property type="entry name" value="ATPase_P-typ_transduc_dom_A_sf"/>
</dbReference>
<dbReference type="InterPro" id="IPR036412">
    <property type="entry name" value="HAD-like_sf"/>
</dbReference>
<dbReference type="InterPro" id="IPR023214">
    <property type="entry name" value="HAD_sf"/>
</dbReference>
<dbReference type="InterPro" id="IPR006391">
    <property type="entry name" value="P-type_ATPase_bsu_IA"/>
</dbReference>
<dbReference type="InterPro" id="IPR001757">
    <property type="entry name" value="P_typ_ATPase"/>
</dbReference>
<dbReference type="InterPro" id="IPR044492">
    <property type="entry name" value="P_typ_ATPase_HD_dom"/>
</dbReference>
<dbReference type="NCBIfam" id="TIGR01494">
    <property type="entry name" value="ATPase_P-type"/>
    <property type="match status" value="2"/>
</dbReference>
<dbReference type="NCBIfam" id="TIGR01497">
    <property type="entry name" value="kdpB"/>
    <property type="match status" value="1"/>
</dbReference>
<dbReference type="PANTHER" id="PTHR43743">
    <property type="entry name" value="POTASSIUM-TRANSPORTING ATPASE ATP-BINDING SUBUNIT"/>
    <property type="match status" value="1"/>
</dbReference>
<dbReference type="PANTHER" id="PTHR43743:SF1">
    <property type="entry name" value="POTASSIUM-TRANSPORTING ATPASE ATP-BINDING SUBUNIT"/>
    <property type="match status" value="1"/>
</dbReference>
<dbReference type="Pfam" id="PF00122">
    <property type="entry name" value="E1-E2_ATPase"/>
    <property type="match status" value="1"/>
</dbReference>
<dbReference type="Pfam" id="PF00702">
    <property type="entry name" value="Hydrolase"/>
    <property type="match status" value="1"/>
</dbReference>
<dbReference type="PRINTS" id="PR00119">
    <property type="entry name" value="CATATPASE"/>
</dbReference>
<dbReference type="SFLD" id="SFLDS00003">
    <property type="entry name" value="Haloacid_Dehalogenase"/>
    <property type="match status" value="1"/>
</dbReference>
<dbReference type="SFLD" id="SFLDF00027">
    <property type="entry name" value="p-type_atpase"/>
    <property type="match status" value="1"/>
</dbReference>
<dbReference type="SUPFAM" id="SSF81653">
    <property type="entry name" value="Calcium ATPase, transduction domain A"/>
    <property type="match status" value="1"/>
</dbReference>
<dbReference type="SUPFAM" id="SSF81665">
    <property type="entry name" value="Calcium ATPase, transmembrane domain M"/>
    <property type="match status" value="1"/>
</dbReference>
<dbReference type="SUPFAM" id="SSF56784">
    <property type="entry name" value="HAD-like"/>
    <property type="match status" value="1"/>
</dbReference>
<dbReference type="SUPFAM" id="SSF81660">
    <property type="entry name" value="Metal cation-transporting ATPase, ATP-binding domain N"/>
    <property type="match status" value="1"/>
</dbReference>
<dbReference type="PROSITE" id="PS00154">
    <property type="entry name" value="ATPASE_E1_E2"/>
    <property type="match status" value="1"/>
</dbReference>
<gene>
    <name evidence="1" type="primary">kdpB</name>
    <name type="ordered locus">UTI89_C0701</name>
</gene>